<feature type="chain" id="PRO_0000111140" description="Small ribosomal subunit protein bS18">
    <location>
        <begin position="1"/>
        <end position="82"/>
    </location>
</feature>
<reference key="1">
    <citation type="journal article" date="1999" name="Nat. Genet.">
        <title>Comparative genomes of Chlamydia pneumoniae and C. trachomatis.</title>
        <authorList>
            <person name="Kalman S."/>
            <person name="Mitchell W.P."/>
            <person name="Marathe R."/>
            <person name="Lammel C.J."/>
            <person name="Fan J."/>
            <person name="Hyman R.W."/>
            <person name="Olinger L."/>
            <person name="Grimwood J."/>
            <person name="Davis R.W."/>
            <person name="Stephens R.S."/>
        </authorList>
    </citation>
    <scope>NUCLEOTIDE SEQUENCE [LARGE SCALE GENOMIC DNA]</scope>
    <source>
        <strain>CWL029</strain>
    </source>
</reference>
<reference key="2">
    <citation type="journal article" date="2000" name="Nucleic Acids Res.">
        <title>Genome sequences of Chlamydia trachomatis MoPn and Chlamydia pneumoniae AR39.</title>
        <authorList>
            <person name="Read T.D."/>
            <person name="Brunham R.C."/>
            <person name="Shen C."/>
            <person name="Gill S.R."/>
            <person name="Heidelberg J.F."/>
            <person name="White O."/>
            <person name="Hickey E.K."/>
            <person name="Peterson J.D."/>
            <person name="Utterback T.R."/>
            <person name="Berry K.J."/>
            <person name="Bass S."/>
            <person name="Linher K.D."/>
            <person name="Weidman J.F."/>
            <person name="Khouri H.M."/>
            <person name="Craven B."/>
            <person name="Bowman C."/>
            <person name="Dodson R.J."/>
            <person name="Gwinn M.L."/>
            <person name="Nelson W.C."/>
            <person name="DeBoy R.T."/>
            <person name="Kolonay J.F."/>
            <person name="McClarty G."/>
            <person name="Salzberg S.L."/>
            <person name="Eisen J.A."/>
            <person name="Fraser C.M."/>
        </authorList>
    </citation>
    <scope>NUCLEOTIDE SEQUENCE [LARGE SCALE GENOMIC DNA]</scope>
    <source>
        <strain>AR39</strain>
    </source>
</reference>
<reference key="3">
    <citation type="journal article" date="2000" name="Nucleic Acids Res.">
        <title>Comparison of whole genome sequences of Chlamydia pneumoniae J138 from Japan and CWL029 from USA.</title>
        <authorList>
            <person name="Shirai M."/>
            <person name="Hirakawa H."/>
            <person name="Kimoto M."/>
            <person name="Tabuchi M."/>
            <person name="Kishi F."/>
            <person name="Ouchi K."/>
            <person name="Shiba T."/>
            <person name="Ishii K."/>
            <person name="Hattori M."/>
            <person name="Kuhara S."/>
            <person name="Nakazawa T."/>
        </authorList>
    </citation>
    <scope>NUCLEOTIDE SEQUENCE [LARGE SCALE GENOMIC DNA]</scope>
    <source>
        <strain>J138</strain>
    </source>
</reference>
<reference key="4">
    <citation type="submission" date="2002-05" db="EMBL/GenBank/DDBJ databases">
        <title>The genome sequence of Chlamydia pneumoniae TW183 and comparison with other Chlamydia strains based on whole genome sequence analysis.</title>
        <authorList>
            <person name="Geng M.M."/>
            <person name="Schuhmacher A."/>
            <person name="Muehldorfer I."/>
            <person name="Bensch K.W."/>
            <person name="Schaefer K.P."/>
            <person name="Schneider S."/>
            <person name="Pohl T."/>
            <person name="Essig A."/>
            <person name="Marre R."/>
            <person name="Melchers K."/>
        </authorList>
    </citation>
    <scope>NUCLEOTIDE SEQUENCE [LARGE SCALE GENOMIC DNA]</scope>
    <source>
        <strain>TW-183</strain>
    </source>
</reference>
<sequence>MNKPVHNNEHRRKRFNKKCPFVSAGWKTIDYKDVETLKKFITERGKVLPRRITGVSSRFQGVLSQAIKRARHLGLLPFVGED</sequence>
<accession>Q9Z6V4</accession>
<accession>Q9JQD8</accession>
<evidence type="ECO:0000255" key="1">
    <source>
        <dbReference type="HAMAP-Rule" id="MF_00270"/>
    </source>
</evidence>
<evidence type="ECO:0000305" key="2"/>
<dbReference type="EMBL" id="AE001363">
    <property type="protein sequence ID" value="AAD19090.1"/>
    <property type="molecule type" value="Genomic_DNA"/>
</dbReference>
<dbReference type="EMBL" id="AE002161">
    <property type="protein sequence ID" value="AAF38692.1"/>
    <property type="molecule type" value="Genomic_DNA"/>
</dbReference>
<dbReference type="EMBL" id="BA000008">
    <property type="protein sequence ID" value="BAA99160.1"/>
    <property type="molecule type" value="Genomic_DNA"/>
</dbReference>
<dbReference type="EMBL" id="AE009440">
    <property type="protein sequence ID" value="AAP98918.1"/>
    <property type="molecule type" value="Genomic_DNA"/>
</dbReference>
<dbReference type="PIR" id="F86609">
    <property type="entry name" value="F86609"/>
</dbReference>
<dbReference type="PIR" id="G72014">
    <property type="entry name" value="G72014"/>
</dbReference>
<dbReference type="RefSeq" id="NP_225147.1">
    <property type="nucleotide sequence ID" value="NC_000922.1"/>
</dbReference>
<dbReference type="RefSeq" id="WP_010883587.1">
    <property type="nucleotide sequence ID" value="NZ_LN847257.1"/>
</dbReference>
<dbReference type="SMR" id="Q9Z6V4"/>
<dbReference type="STRING" id="406984.CPK_ORF00367"/>
<dbReference type="GeneID" id="45051009"/>
<dbReference type="KEGG" id="cpa:CP_0907"/>
<dbReference type="KEGG" id="cpj:rs18"/>
<dbReference type="KEGG" id="cpn:CPn_0952"/>
<dbReference type="KEGG" id="cpt:CpB0989"/>
<dbReference type="PATRIC" id="fig|115713.3.peg.1042"/>
<dbReference type="eggNOG" id="COG0238">
    <property type="taxonomic scope" value="Bacteria"/>
</dbReference>
<dbReference type="HOGENOM" id="CLU_148710_2_2_0"/>
<dbReference type="OMA" id="QKKYCRF"/>
<dbReference type="OrthoDB" id="9812008at2"/>
<dbReference type="Proteomes" id="UP000000583">
    <property type="component" value="Chromosome"/>
</dbReference>
<dbReference type="Proteomes" id="UP000000801">
    <property type="component" value="Chromosome"/>
</dbReference>
<dbReference type="GO" id="GO:0022627">
    <property type="term" value="C:cytosolic small ribosomal subunit"/>
    <property type="evidence" value="ECO:0007669"/>
    <property type="project" value="TreeGrafter"/>
</dbReference>
<dbReference type="GO" id="GO:0070181">
    <property type="term" value="F:small ribosomal subunit rRNA binding"/>
    <property type="evidence" value="ECO:0007669"/>
    <property type="project" value="TreeGrafter"/>
</dbReference>
<dbReference type="GO" id="GO:0003735">
    <property type="term" value="F:structural constituent of ribosome"/>
    <property type="evidence" value="ECO:0007669"/>
    <property type="project" value="InterPro"/>
</dbReference>
<dbReference type="GO" id="GO:0006412">
    <property type="term" value="P:translation"/>
    <property type="evidence" value="ECO:0007669"/>
    <property type="project" value="UniProtKB-UniRule"/>
</dbReference>
<dbReference type="Gene3D" id="4.10.640.10">
    <property type="entry name" value="Ribosomal protein S18"/>
    <property type="match status" value="1"/>
</dbReference>
<dbReference type="HAMAP" id="MF_00270">
    <property type="entry name" value="Ribosomal_bS18"/>
    <property type="match status" value="1"/>
</dbReference>
<dbReference type="InterPro" id="IPR001648">
    <property type="entry name" value="Ribosomal_bS18"/>
</dbReference>
<dbReference type="InterPro" id="IPR018275">
    <property type="entry name" value="Ribosomal_bS18_CS"/>
</dbReference>
<dbReference type="InterPro" id="IPR036870">
    <property type="entry name" value="Ribosomal_bS18_sf"/>
</dbReference>
<dbReference type="NCBIfam" id="TIGR00165">
    <property type="entry name" value="S18"/>
    <property type="match status" value="1"/>
</dbReference>
<dbReference type="PANTHER" id="PTHR13479">
    <property type="entry name" value="30S RIBOSOMAL PROTEIN S18"/>
    <property type="match status" value="1"/>
</dbReference>
<dbReference type="PANTHER" id="PTHR13479:SF40">
    <property type="entry name" value="SMALL RIBOSOMAL SUBUNIT PROTEIN BS18M"/>
    <property type="match status" value="1"/>
</dbReference>
<dbReference type="Pfam" id="PF01084">
    <property type="entry name" value="Ribosomal_S18"/>
    <property type="match status" value="1"/>
</dbReference>
<dbReference type="PRINTS" id="PR00974">
    <property type="entry name" value="RIBOSOMALS18"/>
</dbReference>
<dbReference type="SUPFAM" id="SSF46911">
    <property type="entry name" value="Ribosomal protein S18"/>
    <property type="match status" value="1"/>
</dbReference>
<dbReference type="PROSITE" id="PS00057">
    <property type="entry name" value="RIBOSOMAL_S18"/>
    <property type="match status" value="1"/>
</dbReference>
<proteinExistence type="inferred from homology"/>
<keyword id="KW-0687">Ribonucleoprotein</keyword>
<keyword id="KW-0689">Ribosomal protein</keyword>
<keyword id="KW-0694">RNA-binding</keyword>
<keyword id="KW-0699">rRNA-binding</keyword>
<protein>
    <recommendedName>
        <fullName evidence="1">Small ribosomal subunit protein bS18</fullName>
    </recommendedName>
    <alternativeName>
        <fullName evidence="2">30S ribosomal protein S18</fullName>
    </alternativeName>
</protein>
<organism>
    <name type="scientific">Chlamydia pneumoniae</name>
    <name type="common">Chlamydophila pneumoniae</name>
    <dbReference type="NCBI Taxonomy" id="83558"/>
    <lineage>
        <taxon>Bacteria</taxon>
        <taxon>Pseudomonadati</taxon>
        <taxon>Chlamydiota</taxon>
        <taxon>Chlamydiia</taxon>
        <taxon>Chlamydiales</taxon>
        <taxon>Chlamydiaceae</taxon>
        <taxon>Chlamydia/Chlamydophila group</taxon>
        <taxon>Chlamydia</taxon>
    </lineage>
</organism>
<name>RS18_CHLPN</name>
<comment type="function">
    <text evidence="1">Binds as a heterodimer with protein bS6 to the central domain of the 16S rRNA, where it helps stabilize the platform of the 30S subunit.</text>
</comment>
<comment type="subunit">
    <text evidence="1">Part of the 30S ribosomal subunit. Forms a tight heterodimer with protein bS6.</text>
</comment>
<comment type="similarity">
    <text evidence="1">Belongs to the bacterial ribosomal protein bS18 family.</text>
</comment>
<gene>
    <name evidence="1" type="primary">rpsR</name>
    <name type="synonym">rs18</name>
    <name type="ordered locus">CPn_0952</name>
    <name type="ordered locus">CP_0907</name>
    <name type="ordered locus">CpB0989</name>
</gene>